<sequence>MKNVVIVDCLRTPMGRSKGGAFRHTRAEDLSAHLMKGILARNPQVNPSEIEDIYWGCVQQTLEQGFNVARNAALLAGLPIEIGAVTVNRLCGSSMQALHDGARAIMTGDAEICLIGGVEHMGHVPMNHGVDFHPGMSKHVAKAAGMMGLTAEMLGKLHGISREQQDEFAARSHARAHAATLEGRFKNEILPTEGHAADGTLFTLDHDEVIRPETTVEGLSQLRPVFDPANGTVTAGTSSALSDGASAMLIMSEEKANELGVTIRARIKGMAIAGCDPSIMGYGPVPATQKALKRAGLSIEDMDVIELNEAFAAQSLPCAKDLGLLDVMDEKVNLNGGAIALGHPLGCSGARISTTLINLMEAKDAKYGLATMCIGLGQGIATVFERP</sequence>
<dbReference type="EC" id="2.3.1.16" evidence="1"/>
<dbReference type="EMBL" id="BA000037">
    <property type="protein sequence ID" value="BAC92792.1"/>
    <property type="molecule type" value="Genomic_DNA"/>
</dbReference>
<dbReference type="RefSeq" id="WP_011149064.1">
    <property type="nucleotide sequence ID" value="NC_005139.1"/>
</dbReference>
<dbReference type="SMR" id="Q7MQI0"/>
<dbReference type="STRING" id="672.VV93_v1c00170"/>
<dbReference type="KEGG" id="vvy:VV0028"/>
<dbReference type="PATRIC" id="fig|196600.6.peg.81"/>
<dbReference type="eggNOG" id="COG0183">
    <property type="taxonomic scope" value="Bacteria"/>
</dbReference>
<dbReference type="HOGENOM" id="CLU_031026_2_3_6"/>
<dbReference type="UniPathway" id="UPA00659"/>
<dbReference type="Proteomes" id="UP000002675">
    <property type="component" value="Chromosome I"/>
</dbReference>
<dbReference type="GO" id="GO:0005737">
    <property type="term" value="C:cytoplasm"/>
    <property type="evidence" value="ECO:0007669"/>
    <property type="project" value="UniProtKB-SubCell"/>
</dbReference>
<dbReference type="GO" id="GO:0003988">
    <property type="term" value="F:acetyl-CoA C-acyltransferase activity"/>
    <property type="evidence" value="ECO:0007669"/>
    <property type="project" value="UniProtKB-UniRule"/>
</dbReference>
<dbReference type="GO" id="GO:0006635">
    <property type="term" value="P:fatty acid beta-oxidation"/>
    <property type="evidence" value="ECO:0007669"/>
    <property type="project" value="UniProtKB-UniRule"/>
</dbReference>
<dbReference type="GO" id="GO:0010124">
    <property type="term" value="P:phenylacetate catabolic process"/>
    <property type="evidence" value="ECO:0007669"/>
    <property type="project" value="TreeGrafter"/>
</dbReference>
<dbReference type="CDD" id="cd00751">
    <property type="entry name" value="thiolase"/>
    <property type="match status" value="1"/>
</dbReference>
<dbReference type="FunFam" id="3.40.47.10:FF:000010">
    <property type="entry name" value="Acetyl-CoA acetyltransferase (Thiolase)"/>
    <property type="match status" value="1"/>
</dbReference>
<dbReference type="Gene3D" id="3.40.47.10">
    <property type="match status" value="2"/>
</dbReference>
<dbReference type="HAMAP" id="MF_01620">
    <property type="entry name" value="FadA"/>
    <property type="match status" value="1"/>
</dbReference>
<dbReference type="InterPro" id="IPR012805">
    <property type="entry name" value="FadA"/>
</dbReference>
<dbReference type="InterPro" id="IPR002155">
    <property type="entry name" value="Thiolase"/>
</dbReference>
<dbReference type="InterPro" id="IPR016039">
    <property type="entry name" value="Thiolase-like"/>
</dbReference>
<dbReference type="InterPro" id="IPR050215">
    <property type="entry name" value="Thiolase-like_sf_Thiolase"/>
</dbReference>
<dbReference type="InterPro" id="IPR020615">
    <property type="entry name" value="Thiolase_acyl_enz_int_AS"/>
</dbReference>
<dbReference type="InterPro" id="IPR020610">
    <property type="entry name" value="Thiolase_AS"/>
</dbReference>
<dbReference type="InterPro" id="IPR020617">
    <property type="entry name" value="Thiolase_C"/>
</dbReference>
<dbReference type="InterPro" id="IPR020613">
    <property type="entry name" value="Thiolase_CS"/>
</dbReference>
<dbReference type="InterPro" id="IPR020616">
    <property type="entry name" value="Thiolase_N"/>
</dbReference>
<dbReference type="NCBIfam" id="TIGR01930">
    <property type="entry name" value="AcCoA-C-Actrans"/>
    <property type="match status" value="1"/>
</dbReference>
<dbReference type="NCBIfam" id="TIGR02445">
    <property type="entry name" value="fadA"/>
    <property type="match status" value="1"/>
</dbReference>
<dbReference type="NCBIfam" id="NF006510">
    <property type="entry name" value="PRK08947.1"/>
    <property type="match status" value="1"/>
</dbReference>
<dbReference type="PANTHER" id="PTHR43853:SF11">
    <property type="entry name" value="3-KETOACYL-COA THIOLASE FADA"/>
    <property type="match status" value="1"/>
</dbReference>
<dbReference type="PANTHER" id="PTHR43853">
    <property type="entry name" value="3-KETOACYL-COA THIOLASE, PEROXISOMAL"/>
    <property type="match status" value="1"/>
</dbReference>
<dbReference type="Pfam" id="PF02803">
    <property type="entry name" value="Thiolase_C"/>
    <property type="match status" value="1"/>
</dbReference>
<dbReference type="Pfam" id="PF00108">
    <property type="entry name" value="Thiolase_N"/>
    <property type="match status" value="1"/>
</dbReference>
<dbReference type="PIRSF" id="PIRSF000429">
    <property type="entry name" value="Ac-CoA_Ac_transf"/>
    <property type="match status" value="1"/>
</dbReference>
<dbReference type="SUPFAM" id="SSF53901">
    <property type="entry name" value="Thiolase-like"/>
    <property type="match status" value="2"/>
</dbReference>
<dbReference type="PROSITE" id="PS00098">
    <property type="entry name" value="THIOLASE_1"/>
    <property type="match status" value="1"/>
</dbReference>
<dbReference type="PROSITE" id="PS00737">
    <property type="entry name" value="THIOLASE_2"/>
    <property type="match status" value="1"/>
</dbReference>
<dbReference type="PROSITE" id="PS00099">
    <property type="entry name" value="THIOLASE_3"/>
    <property type="match status" value="1"/>
</dbReference>
<proteinExistence type="inferred from homology"/>
<keyword id="KW-0012">Acyltransferase</keyword>
<keyword id="KW-0963">Cytoplasm</keyword>
<keyword id="KW-0276">Fatty acid metabolism</keyword>
<keyword id="KW-0442">Lipid degradation</keyword>
<keyword id="KW-0443">Lipid metabolism</keyword>
<keyword id="KW-0808">Transferase</keyword>
<evidence type="ECO:0000255" key="1">
    <source>
        <dbReference type="HAMAP-Rule" id="MF_01620"/>
    </source>
</evidence>
<reference key="1">
    <citation type="journal article" date="2003" name="Genome Res.">
        <title>Comparative genome analysis of Vibrio vulnificus, a marine pathogen.</title>
        <authorList>
            <person name="Chen C.-Y."/>
            <person name="Wu K.-M."/>
            <person name="Chang Y.-C."/>
            <person name="Chang C.-H."/>
            <person name="Tsai H.-C."/>
            <person name="Liao T.-L."/>
            <person name="Liu Y.-M."/>
            <person name="Chen H.-J."/>
            <person name="Shen A.B.-T."/>
            <person name="Li J.-C."/>
            <person name="Su T.-L."/>
            <person name="Shao C.-P."/>
            <person name="Lee C.-T."/>
            <person name="Hor L.-I."/>
            <person name="Tsai S.-F."/>
        </authorList>
    </citation>
    <scope>NUCLEOTIDE SEQUENCE [LARGE SCALE GENOMIC DNA]</scope>
    <source>
        <strain>YJ016</strain>
    </source>
</reference>
<gene>
    <name evidence="1" type="primary">fadA</name>
    <name type="ordered locus">VV0028</name>
</gene>
<name>FADA_VIBVY</name>
<protein>
    <recommendedName>
        <fullName evidence="1">3-ketoacyl-CoA thiolase</fullName>
        <ecNumber evidence="1">2.3.1.16</ecNumber>
    </recommendedName>
    <alternativeName>
        <fullName evidence="1">Acetyl-CoA acyltransferase</fullName>
    </alternativeName>
    <alternativeName>
        <fullName evidence="1">Beta-ketothiolase</fullName>
    </alternativeName>
    <alternativeName>
        <fullName evidence="1">Fatty acid oxidation complex subunit beta</fullName>
    </alternativeName>
</protein>
<accession>Q7MQI0</accession>
<comment type="function">
    <text evidence="1">Catalyzes the final step of fatty acid oxidation in which acetyl-CoA is released and the CoA ester of a fatty acid two carbons shorter is formed.</text>
</comment>
<comment type="catalytic activity">
    <reaction evidence="1">
        <text>an acyl-CoA + acetyl-CoA = a 3-oxoacyl-CoA + CoA</text>
        <dbReference type="Rhea" id="RHEA:21564"/>
        <dbReference type="ChEBI" id="CHEBI:57287"/>
        <dbReference type="ChEBI" id="CHEBI:57288"/>
        <dbReference type="ChEBI" id="CHEBI:58342"/>
        <dbReference type="ChEBI" id="CHEBI:90726"/>
        <dbReference type="EC" id="2.3.1.16"/>
    </reaction>
</comment>
<comment type="pathway">
    <text evidence="1">Lipid metabolism; fatty acid beta-oxidation.</text>
</comment>
<comment type="subunit">
    <text evidence="1">Heterotetramer of two alpha chains (FadB) and two beta chains (FadA).</text>
</comment>
<comment type="subcellular location">
    <subcellularLocation>
        <location evidence="1">Cytoplasm</location>
    </subcellularLocation>
</comment>
<comment type="similarity">
    <text evidence="1">Belongs to the thiolase-like superfamily. Thiolase family.</text>
</comment>
<organism>
    <name type="scientific">Vibrio vulnificus (strain YJ016)</name>
    <dbReference type="NCBI Taxonomy" id="196600"/>
    <lineage>
        <taxon>Bacteria</taxon>
        <taxon>Pseudomonadati</taxon>
        <taxon>Pseudomonadota</taxon>
        <taxon>Gammaproteobacteria</taxon>
        <taxon>Vibrionales</taxon>
        <taxon>Vibrionaceae</taxon>
        <taxon>Vibrio</taxon>
    </lineage>
</organism>
<feature type="chain" id="PRO_0000206399" description="3-ketoacyl-CoA thiolase">
    <location>
        <begin position="1"/>
        <end position="387"/>
    </location>
</feature>
<feature type="active site" description="Acyl-thioester intermediate" evidence="1">
    <location>
        <position position="91"/>
    </location>
</feature>
<feature type="active site" description="Proton acceptor" evidence="1">
    <location>
        <position position="343"/>
    </location>
</feature>
<feature type="active site" description="Proton acceptor" evidence="1">
    <location>
        <position position="373"/>
    </location>
</feature>